<keyword id="KW-0067">ATP-binding</keyword>
<keyword id="KW-0418">Kinase</keyword>
<keyword id="KW-0460">Magnesium</keyword>
<keyword id="KW-0479">Metal-binding</keyword>
<keyword id="KW-0547">Nucleotide-binding</keyword>
<keyword id="KW-1185">Reference proteome</keyword>
<keyword id="KW-0808">Transferase</keyword>
<keyword id="KW-0862">Zinc</keyword>
<gene>
    <name evidence="1" type="primary">pdxK</name>
    <name type="ordered locus">SSON_2508</name>
</gene>
<evidence type="ECO:0000255" key="1">
    <source>
        <dbReference type="HAMAP-Rule" id="MF_01638"/>
    </source>
</evidence>
<reference key="1">
    <citation type="journal article" date="2005" name="Nucleic Acids Res.">
        <title>Genome dynamics and diversity of Shigella species, the etiologic agents of bacillary dysentery.</title>
        <authorList>
            <person name="Yang F."/>
            <person name="Yang J."/>
            <person name="Zhang X."/>
            <person name="Chen L."/>
            <person name="Jiang Y."/>
            <person name="Yan Y."/>
            <person name="Tang X."/>
            <person name="Wang J."/>
            <person name="Xiong Z."/>
            <person name="Dong J."/>
            <person name="Xue Y."/>
            <person name="Zhu Y."/>
            <person name="Xu X."/>
            <person name="Sun L."/>
            <person name="Chen S."/>
            <person name="Nie H."/>
            <person name="Peng J."/>
            <person name="Xu J."/>
            <person name="Wang Y."/>
            <person name="Yuan Z."/>
            <person name="Wen Y."/>
            <person name="Yao Z."/>
            <person name="Shen Y."/>
            <person name="Qiang B."/>
            <person name="Hou Y."/>
            <person name="Yu J."/>
            <person name="Jin Q."/>
        </authorList>
    </citation>
    <scope>NUCLEOTIDE SEQUENCE [LARGE SCALE GENOMIC DNA]</scope>
    <source>
        <strain>Ss046</strain>
    </source>
</reference>
<sequence length="283" mass="30860">MSSLLLFNDKSRALQADIVAVQSQVVYGSVGNSIAVPAIKQNGLNVFAVPTVLLSNTPHYDTFYGGAIPDEWFSGYLRALQERDALRQLRAVTTGYMGTASQIKILAEWLTALRKDHPDLLIMVDPVIGDIDSGIYVKPDLPEAYRQYLLPLAQGITPNIFELEILTGKNCRDLDSAIAAAKSLLSDTLKWVVITSASGNEENQEMQVVVVSADSVNVISHSRVKTDLKGTGDLFCAQLISGLLKGKALNDAVHRAGLRVLEVMRYTQQHESDELILPPLAEA</sequence>
<name>PDXK_SHISS</name>
<feature type="chain" id="PRO_0000268844" description="Pyridoxine/pyridoxal/pyridoxamine kinase">
    <location>
        <begin position="1"/>
        <end position="283"/>
    </location>
</feature>
<feature type="binding site" evidence="1">
    <location>
        <position position="23"/>
    </location>
    <ligand>
        <name>substrate</name>
    </ligand>
</feature>
<feature type="binding site" evidence="1">
    <location>
        <position position="59"/>
    </location>
    <ligand>
        <name>substrate</name>
    </ligand>
</feature>
<feature type="binding site" evidence="1">
    <location>
        <position position="125"/>
    </location>
    <ligand>
        <name>ATP</name>
        <dbReference type="ChEBI" id="CHEBI:30616"/>
    </ligand>
</feature>
<feature type="binding site" evidence="1">
    <location>
        <position position="136"/>
    </location>
    <ligand>
        <name>Mg(2+)</name>
        <dbReference type="ChEBI" id="CHEBI:18420"/>
    </ligand>
</feature>
<feature type="binding site" evidence="1">
    <location>
        <position position="157"/>
    </location>
    <ligand>
        <name>ATP</name>
        <dbReference type="ChEBI" id="CHEBI:30616"/>
    </ligand>
</feature>
<feature type="binding site" evidence="1">
    <location>
        <position position="162"/>
    </location>
    <ligand>
        <name>ATP</name>
        <dbReference type="ChEBI" id="CHEBI:30616"/>
    </ligand>
</feature>
<feature type="binding site" evidence="1">
    <location>
        <position position="162"/>
    </location>
    <ligand>
        <name>Mg(2+)</name>
        <dbReference type="ChEBI" id="CHEBI:18420"/>
    </ligand>
</feature>
<feature type="binding site" evidence="1">
    <location>
        <position position="195"/>
    </location>
    <ligand>
        <name>ATP</name>
        <dbReference type="ChEBI" id="CHEBI:30616"/>
    </ligand>
</feature>
<feature type="binding site" evidence="1">
    <location>
        <begin position="221"/>
        <end position="224"/>
    </location>
    <ligand>
        <name>ATP</name>
        <dbReference type="ChEBI" id="CHEBI:30616"/>
    </ligand>
</feature>
<feature type="binding site" evidence="1">
    <location>
        <position position="231"/>
    </location>
    <ligand>
        <name>ATP</name>
        <dbReference type="ChEBI" id="CHEBI:30616"/>
    </ligand>
</feature>
<feature type="binding site" evidence="1">
    <location>
        <position position="233"/>
    </location>
    <ligand>
        <name>substrate</name>
    </ligand>
</feature>
<organism>
    <name type="scientific">Shigella sonnei (strain Ss046)</name>
    <dbReference type="NCBI Taxonomy" id="300269"/>
    <lineage>
        <taxon>Bacteria</taxon>
        <taxon>Pseudomonadati</taxon>
        <taxon>Pseudomonadota</taxon>
        <taxon>Gammaproteobacteria</taxon>
        <taxon>Enterobacterales</taxon>
        <taxon>Enterobacteriaceae</taxon>
        <taxon>Shigella</taxon>
    </lineage>
</organism>
<accession>Q3YZC3</accession>
<proteinExistence type="inferred from homology"/>
<comment type="function">
    <text evidence="1">B6-vitamer kinase involved in the salvage pathway of pyridoxal 5'-phosphate (PLP). Catalyzes the phosphorylation of pyridoxine (PN), pyridoxal (PL), and pyridoxamine (PM), forming their respective 5'-phosphorylated esters, i.e. PNP, PLP and PMP.</text>
</comment>
<comment type="catalytic activity">
    <reaction evidence="1">
        <text>pyridoxal + ATP = pyridoxal 5'-phosphate + ADP + H(+)</text>
        <dbReference type="Rhea" id="RHEA:10224"/>
        <dbReference type="ChEBI" id="CHEBI:15378"/>
        <dbReference type="ChEBI" id="CHEBI:17310"/>
        <dbReference type="ChEBI" id="CHEBI:30616"/>
        <dbReference type="ChEBI" id="CHEBI:456216"/>
        <dbReference type="ChEBI" id="CHEBI:597326"/>
        <dbReference type="EC" id="2.7.1.35"/>
    </reaction>
</comment>
<comment type="catalytic activity">
    <reaction evidence="1">
        <text>pyridoxine + ATP = pyridoxine 5'-phosphate + ADP + H(+)</text>
        <dbReference type="Rhea" id="RHEA:25108"/>
        <dbReference type="ChEBI" id="CHEBI:15378"/>
        <dbReference type="ChEBI" id="CHEBI:16709"/>
        <dbReference type="ChEBI" id="CHEBI:30616"/>
        <dbReference type="ChEBI" id="CHEBI:58589"/>
        <dbReference type="ChEBI" id="CHEBI:456216"/>
        <dbReference type="EC" id="2.7.1.35"/>
    </reaction>
</comment>
<comment type="catalytic activity">
    <reaction evidence="1">
        <text>pyridoxamine + ATP = pyridoxamine 5'-phosphate + ADP + H(+)</text>
        <dbReference type="Rhea" id="RHEA:25104"/>
        <dbReference type="ChEBI" id="CHEBI:15378"/>
        <dbReference type="ChEBI" id="CHEBI:30616"/>
        <dbReference type="ChEBI" id="CHEBI:57761"/>
        <dbReference type="ChEBI" id="CHEBI:58451"/>
        <dbReference type="ChEBI" id="CHEBI:456216"/>
        <dbReference type="EC" id="2.7.1.35"/>
    </reaction>
</comment>
<comment type="cofactor">
    <cofactor evidence="1">
        <name>Mg(2+)</name>
        <dbReference type="ChEBI" id="CHEBI:18420"/>
    </cofactor>
</comment>
<comment type="pathway">
    <text evidence="1">Cofactor metabolism; pyridoxal 5'-phosphate salvage; pyridoxal 5'-phosphate from pyridoxal: step 1/1.</text>
</comment>
<comment type="pathway">
    <text evidence="1">Cofactor metabolism; pyridoxal 5'-phosphate salvage; pyridoxine 5'-phosphate from pyridoxine: step 1/1.</text>
</comment>
<comment type="pathway">
    <text evidence="1">Cofactor metabolism; pyridoxal 5'-phosphate salvage; pyridoxamine 5'-phosphate from pyridoxamine: step 1/1.</text>
</comment>
<comment type="subunit">
    <text evidence="1">Homodimer.</text>
</comment>
<comment type="similarity">
    <text evidence="1">Belongs to the pyridoxine kinase family. PdxK subfamily.</text>
</comment>
<dbReference type="EC" id="2.7.1.35" evidence="1"/>
<dbReference type="EMBL" id="CP000038">
    <property type="protein sequence ID" value="AAZ89139.1"/>
    <property type="molecule type" value="Genomic_DNA"/>
</dbReference>
<dbReference type="RefSeq" id="WP_000096660.1">
    <property type="nucleotide sequence ID" value="NC_007384.1"/>
</dbReference>
<dbReference type="SMR" id="Q3YZC3"/>
<dbReference type="GeneID" id="93774712"/>
<dbReference type="KEGG" id="ssn:SSON_2508"/>
<dbReference type="HOGENOM" id="CLU_046496_3_1_6"/>
<dbReference type="UniPathway" id="UPA01068">
    <property type="reaction ID" value="UER00298"/>
</dbReference>
<dbReference type="UniPathway" id="UPA01068">
    <property type="reaction ID" value="UER00299"/>
</dbReference>
<dbReference type="UniPathway" id="UPA01068">
    <property type="reaction ID" value="UER00300"/>
</dbReference>
<dbReference type="Proteomes" id="UP000002529">
    <property type="component" value="Chromosome"/>
</dbReference>
<dbReference type="GO" id="GO:0005829">
    <property type="term" value="C:cytosol"/>
    <property type="evidence" value="ECO:0007669"/>
    <property type="project" value="TreeGrafter"/>
</dbReference>
<dbReference type="GO" id="GO:0005524">
    <property type="term" value="F:ATP binding"/>
    <property type="evidence" value="ECO:0007669"/>
    <property type="project" value="UniProtKB-UniRule"/>
</dbReference>
<dbReference type="GO" id="GO:0008902">
    <property type="term" value="F:hydroxymethylpyrimidine kinase activity"/>
    <property type="evidence" value="ECO:0007669"/>
    <property type="project" value="TreeGrafter"/>
</dbReference>
<dbReference type="GO" id="GO:0000287">
    <property type="term" value="F:magnesium ion binding"/>
    <property type="evidence" value="ECO:0007669"/>
    <property type="project" value="UniProtKB-UniRule"/>
</dbReference>
<dbReference type="GO" id="GO:0008478">
    <property type="term" value="F:pyridoxal kinase activity"/>
    <property type="evidence" value="ECO:0007669"/>
    <property type="project" value="UniProtKB-UniRule"/>
</dbReference>
<dbReference type="GO" id="GO:0008270">
    <property type="term" value="F:zinc ion binding"/>
    <property type="evidence" value="ECO:0007669"/>
    <property type="project" value="UniProtKB-UniRule"/>
</dbReference>
<dbReference type="GO" id="GO:0009443">
    <property type="term" value="P:pyridoxal 5'-phosphate salvage"/>
    <property type="evidence" value="ECO:0007669"/>
    <property type="project" value="UniProtKB-UniRule"/>
</dbReference>
<dbReference type="CDD" id="cd01173">
    <property type="entry name" value="pyridoxal_pyridoxamine_kinase"/>
    <property type="match status" value="1"/>
</dbReference>
<dbReference type="FunFam" id="3.40.1190.20:FF:000009">
    <property type="entry name" value="Pyridoxine/pyridoxal/pyridoxamine kinase"/>
    <property type="match status" value="1"/>
</dbReference>
<dbReference type="Gene3D" id="3.40.1190.20">
    <property type="match status" value="1"/>
</dbReference>
<dbReference type="HAMAP" id="MF_01638">
    <property type="entry name" value="PdxK"/>
    <property type="match status" value="1"/>
</dbReference>
<dbReference type="InterPro" id="IPR023479">
    <property type="entry name" value="PdxK"/>
</dbReference>
<dbReference type="InterPro" id="IPR013749">
    <property type="entry name" value="PM/HMP-P_kinase-1"/>
</dbReference>
<dbReference type="InterPro" id="IPR004625">
    <property type="entry name" value="PyrdxlKinase"/>
</dbReference>
<dbReference type="InterPro" id="IPR029056">
    <property type="entry name" value="Ribokinase-like"/>
</dbReference>
<dbReference type="NCBIfam" id="NF006034">
    <property type="entry name" value="PRK08176.1"/>
    <property type="match status" value="1"/>
</dbReference>
<dbReference type="NCBIfam" id="TIGR00687">
    <property type="entry name" value="pyridox_kin"/>
    <property type="match status" value="1"/>
</dbReference>
<dbReference type="PANTHER" id="PTHR10534">
    <property type="entry name" value="PYRIDOXAL KINASE"/>
    <property type="match status" value="1"/>
</dbReference>
<dbReference type="PANTHER" id="PTHR10534:SF15">
    <property type="entry name" value="PYRIDOXINE_PYRIDOXAL_PYRIDOXAMINE KINASE"/>
    <property type="match status" value="1"/>
</dbReference>
<dbReference type="Pfam" id="PF08543">
    <property type="entry name" value="Phos_pyr_kin"/>
    <property type="match status" value="1"/>
</dbReference>
<dbReference type="SUPFAM" id="SSF53613">
    <property type="entry name" value="Ribokinase-like"/>
    <property type="match status" value="1"/>
</dbReference>
<protein>
    <recommendedName>
        <fullName evidence="1">Pyridoxine/pyridoxal/pyridoxamine kinase</fullName>
        <shortName evidence="1">PN/PL/PM kinase</shortName>
        <ecNumber evidence="1">2.7.1.35</ecNumber>
    </recommendedName>
    <alternativeName>
        <fullName evidence="1">B6-vitamer kinase</fullName>
    </alternativeName>
</protein>